<keyword id="KW-0349">Heme</keyword>
<keyword id="KW-0408">Iron</keyword>
<keyword id="KW-0479">Metal-binding</keyword>
<keyword id="KW-0503">Monooxygenase</keyword>
<keyword id="KW-0560">Oxidoreductase</keyword>
<organism>
    <name type="scientific">Penicillium fellutanum</name>
    <dbReference type="NCBI Taxonomy" id="70095"/>
    <lineage>
        <taxon>Eukaryota</taxon>
        <taxon>Fungi</taxon>
        <taxon>Dikarya</taxon>
        <taxon>Ascomycota</taxon>
        <taxon>Pezizomycotina</taxon>
        <taxon>Eurotiomycetes</taxon>
        <taxon>Eurotiomycetidae</taxon>
        <taxon>Eurotiales</taxon>
        <taxon>Aspergillaceae</taxon>
        <taxon>Penicillium</taxon>
    </lineage>
</organism>
<proteinExistence type="inferred from homology"/>
<gene>
    <name evidence="4" type="primary">phqM</name>
</gene>
<sequence length="536" mass="60673">MKQGTTGMYCEVGPCTNAKDAHSPCLRPPGYAKPPTVRVCRTRGHNLPLSKVPGPKLAALTKWYGFYHNVIRDGQYSLSFSSLHKKYDSPVIRIGPNAVHVDDPSFYQEMFSMTTKYYKEPEFYKALGAEGAMASILDPKHHRMYRNHLRPLFASRAVDGVVPRLKLELEKATRIFDMHRKDYHPLNIQALYRSFTSDMVCELLFGESPDFIGDGNGYHPFVAALDRFTAFSWLVVYFPWVKSIQFHLPFGLGDKLAPEFNDFKRQCETWEAKAQLKRESGVQVGQKNLFDYYAELGAGPETAVSGVAQPVEDAFNFLTAGTESTAYTLSSTAFHILNNPQVFKKLHEELDASVDFIRNDFNAKQIQALPYLGAVLKETMRLSTAVPGNLPRLVPPGGVTVGSVYLPEGTYPQQTIVSSSHLSIITNDTIFHDPYKFKPERWLGEEGKDLERWHVGFSRGPRRCIGSSLAYLELFCVTAYVFSRFEMSLFETDESSMQWVDRISARNRKDVQVRILSDRWEKEAHSIAGGTLLKEE</sequence>
<dbReference type="EC" id="1.-.-.-" evidence="6"/>
<dbReference type="EMBL" id="JQ708195">
    <property type="protein sequence ID" value="AGA37280.1"/>
    <property type="molecule type" value="Genomic_DNA"/>
</dbReference>
<dbReference type="SMR" id="L0E2R0"/>
<dbReference type="GO" id="GO:0020037">
    <property type="term" value="F:heme binding"/>
    <property type="evidence" value="ECO:0007669"/>
    <property type="project" value="InterPro"/>
</dbReference>
<dbReference type="GO" id="GO:0005506">
    <property type="term" value="F:iron ion binding"/>
    <property type="evidence" value="ECO:0007669"/>
    <property type="project" value="InterPro"/>
</dbReference>
<dbReference type="GO" id="GO:0004497">
    <property type="term" value="F:monooxygenase activity"/>
    <property type="evidence" value="ECO:0007669"/>
    <property type="project" value="UniProtKB-KW"/>
</dbReference>
<dbReference type="GO" id="GO:0016705">
    <property type="term" value="F:oxidoreductase activity, acting on paired donors, with incorporation or reduction of molecular oxygen"/>
    <property type="evidence" value="ECO:0007669"/>
    <property type="project" value="InterPro"/>
</dbReference>
<dbReference type="GO" id="GO:0043386">
    <property type="term" value="P:mycotoxin biosynthetic process"/>
    <property type="evidence" value="ECO:0007669"/>
    <property type="project" value="UniProtKB-ARBA"/>
</dbReference>
<dbReference type="CDD" id="cd11062">
    <property type="entry name" value="CYP58-like"/>
    <property type="match status" value="1"/>
</dbReference>
<dbReference type="Gene3D" id="1.10.630.10">
    <property type="entry name" value="Cytochrome P450"/>
    <property type="match status" value="1"/>
</dbReference>
<dbReference type="InterPro" id="IPR001128">
    <property type="entry name" value="Cyt_P450"/>
</dbReference>
<dbReference type="InterPro" id="IPR017972">
    <property type="entry name" value="Cyt_P450_CS"/>
</dbReference>
<dbReference type="InterPro" id="IPR002401">
    <property type="entry name" value="Cyt_P450_E_grp-I"/>
</dbReference>
<dbReference type="InterPro" id="IPR036396">
    <property type="entry name" value="Cyt_P450_sf"/>
</dbReference>
<dbReference type="InterPro" id="IPR050121">
    <property type="entry name" value="Cytochrome_P450_monoxygenase"/>
</dbReference>
<dbReference type="PANTHER" id="PTHR24305">
    <property type="entry name" value="CYTOCHROME P450"/>
    <property type="match status" value="1"/>
</dbReference>
<dbReference type="PANTHER" id="PTHR24305:SF166">
    <property type="entry name" value="CYTOCHROME P450 12A4, MITOCHONDRIAL-RELATED"/>
    <property type="match status" value="1"/>
</dbReference>
<dbReference type="Pfam" id="PF00067">
    <property type="entry name" value="p450"/>
    <property type="match status" value="1"/>
</dbReference>
<dbReference type="PRINTS" id="PR00463">
    <property type="entry name" value="EP450I"/>
</dbReference>
<dbReference type="PRINTS" id="PR00385">
    <property type="entry name" value="P450"/>
</dbReference>
<dbReference type="SUPFAM" id="SSF48264">
    <property type="entry name" value="Cytochrome P450"/>
    <property type="match status" value="1"/>
</dbReference>
<dbReference type="PROSITE" id="PS00086">
    <property type="entry name" value="CYTOCHROME_P450"/>
    <property type="match status" value="1"/>
</dbReference>
<comment type="function">
    <text evidence="2 3 6">Cytochrome P450 monooxygenase; part of the gene cluster that mediates the biosynthesis of paraherquamide, a fungal indole alkaloid that belongs to a family of natural products containing a characteristic bicyclo[2.2.2]diazaoctane core (PubMed:23213353). The first steps in the biosynthesis of paraherquamide is the production of the beta-methyl-proline precursor from L-isoleucine (Probable). They require oxidation of a terminally hydroxylated L-isoleucine to the corresponding aldehyde by enzymes which have still to be identified (Probable). Spontaneous cyclization and dehydration would yield the 4-methyl pyrolline-5-carboxylic acid, which is then reduced by the pyrroline-5-carboxylate reductase phqD leading to the beta-methyl-proline precursor (Probable). The next step of paraherquamide biosynthesis involves coupling of beta-methyl-proline and L-tryptophan by the bimodular NRPS phqB, to produce a monooxopiperazine intermediate (Probable). The reductase (R) domain of phqB utilizes NADPH for hydride transfer to reduce the thioester bond of the T domain-tethered linear dipeptide to a hemithioaminal intermediate, which spontaneously cleaves the C-S bond to release the aldehyde product (PubMed:31548667). This compound undergoes spontaneous cyclization and dehydration to give a dienamine which is reverse prenylated at C-2 by the reverse prenyltransferase phqJ (Probable). The other prenyltransferase present in the cluster, phqI may be a redundant gene in the pathway (Probable). During biosynthetic assembly, the key step to produce the polycyclic core is catalyzed by the bifunctional reductase and intramolecular [4+2] Diels-Alderase, phqE, resulting in formation of the [2.2.2] diazaoctane intermediate preparaherquamide (PubMed:31548667). Following formation of preparaherquamide, an indole 2,3-epoxidation-initiated pinacol-like rearrangement is catalyzed by the phqK FAD-dependent monooxygenase (Probable). The prenyltransferase phqA, the cytochrome P450 monooxygenase phqL, and the FAD-linked oxidoreductase phqH (or the cytochrome P450 monooxygenase phqM), are proposed to be involved in the formation of the pyran ring (Probable). The FAD-dependent monooxygenase phqK is likely responsible for generation of the spiro-oxindole, and the N-methylation is likely mediated by the phqN methyltransferase leading to the isolable natural product paraherquamide F (Probable). However, the order of these biosynthetic steps has still to be determined (Probable). In late-stage paraherquamide biosynthesis, the third P450 monooxygenase, phqO, is probably responsible for the C-14 hydroxylation, transforming paraherquamide F to paraherquamide G, and paraherquamide E to the final product paraherquamide A (Probable). The expansion from the 6-membered ring pyran (in paraherquamides F and G) to the 7-membered dioxepin ring (in paraherquamides A and E) represents a poorly understood but intriguing process that probably involves the 2-oxoglutarate-dependent dioxygenase phqC (Probable). Finally, the remaining members of the paraherquamide cluster, including phqI as well as phqM (or phqH), do not have a clearly prescribed role and appear to be redundant (Probable).</text>
</comment>
<comment type="cofactor">
    <cofactor evidence="1">
        <name>heme</name>
        <dbReference type="ChEBI" id="CHEBI:30413"/>
    </cofactor>
</comment>
<comment type="pathway">
    <text evidence="6">Alkaloid biosynthesis.</text>
</comment>
<comment type="similarity">
    <text evidence="5">Belongs to the cytochrome P450 family.</text>
</comment>
<protein>
    <recommendedName>
        <fullName evidence="4">Cytochrome P450 monooxygenase phqM</fullName>
        <ecNumber evidence="6">1.-.-.-</ecNumber>
    </recommendedName>
    <alternativeName>
        <fullName evidence="4">Paraherquamide biosynthesis cluster protein M</fullName>
    </alternativeName>
</protein>
<name>PHQM_PENFE</name>
<accession>L0E2R0</accession>
<evidence type="ECO:0000250" key="1">
    <source>
        <dbReference type="UniProtKB" id="P04798"/>
    </source>
</evidence>
<evidence type="ECO:0000269" key="2">
    <source>
    </source>
</evidence>
<evidence type="ECO:0000269" key="3">
    <source>
    </source>
</evidence>
<evidence type="ECO:0000303" key="4">
    <source>
    </source>
</evidence>
<evidence type="ECO:0000305" key="5"/>
<evidence type="ECO:0000305" key="6">
    <source>
    </source>
</evidence>
<reference key="1">
    <citation type="journal article" date="2012" name="Med. Chem. Commun.">
        <title>Comparative analysis of the biosynthetic systems for fungal bicyclo[2.2.2]diazaoctane indole alkaloids: the (+)/(-)-notoamide, paraherquamide and malbrancheamide pathways.</title>
        <authorList>
            <person name="Li S."/>
            <person name="Anand K."/>
            <person name="Tran H."/>
            <person name="Yu F."/>
            <person name="Finefield J.M."/>
            <person name="Sunderhaus J.D."/>
            <person name="McAfoos T.J."/>
            <person name="Tsukamoto S."/>
            <person name="Williams R.M."/>
            <person name="Sherman D.H."/>
        </authorList>
    </citation>
    <scope>NUCLEOTIDE SEQUENCE [GENOMIC DNA]</scope>
    <scope>FUNCTION</scope>
    <scope>PATHWAY</scope>
    <source>
        <strain>ATCC 20841 / MF5123</strain>
    </source>
</reference>
<reference key="2">
    <citation type="journal article" date="2019" name="Nat. Chem.">
        <title>Fungal indole alkaloid biogenesis through evolution of a bifunctional reductase/Diels-Alderase.</title>
        <authorList>
            <person name="Dan Q."/>
            <person name="Newmister S.A."/>
            <person name="Klas K.R."/>
            <person name="Fraley A.E."/>
            <person name="McAfoos T.J."/>
            <person name="Somoza A.D."/>
            <person name="Sunderhaus J.D."/>
            <person name="Ye Y."/>
            <person name="Shende V.V."/>
            <person name="Yu F."/>
            <person name="Sanders J.N."/>
            <person name="Brown W.C."/>
            <person name="Zhao L."/>
            <person name="Paton R.S."/>
            <person name="Houk K.N."/>
            <person name="Smith J.L."/>
            <person name="Sherman D.H."/>
            <person name="Williams R.M."/>
        </authorList>
    </citation>
    <scope>FUNCTION</scope>
</reference>
<feature type="chain" id="PRO_0000448874" description="Cytochrome P450 monooxygenase phqM">
    <location>
        <begin position="1"/>
        <end position="536"/>
    </location>
</feature>
<feature type="binding site" description="axial binding residue" evidence="1">
    <location>
        <position position="464"/>
    </location>
    <ligand>
        <name>heme</name>
        <dbReference type="ChEBI" id="CHEBI:30413"/>
    </ligand>
    <ligandPart>
        <name>Fe</name>
        <dbReference type="ChEBI" id="CHEBI:18248"/>
    </ligandPart>
</feature>